<keyword id="KW-0017">Alkaloid metabolism</keyword>
<keyword id="KW-0489">Methyltransferase</keyword>
<keyword id="KW-0620">Polyamine biosynthesis</keyword>
<keyword id="KW-0661">Putrescine biosynthesis</keyword>
<keyword id="KW-1185">Reference proteome</keyword>
<keyword id="KW-0949">S-adenosyl-L-methionine</keyword>
<keyword id="KW-0808">Transferase</keyword>
<dbReference type="EC" id="2.1.1.53" evidence="2"/>
<dbReference type="EMBL" id="AF126809">
    <property type="protein sequence ID" value="AAF14878.1"/>
    <property type="molecule type" value="Genomic_DNA"/>
</dbReference>
<dbReference type="RefSeq" id="XP_016478024.1">
    <property type="nucleotide sequence ID" value="XM_016622538.1"/>
</dbReference>
<dbReference type="SMR" id="Q9SEH7"/>
<dbReference type="STRING" id="4097.A0A1S4AN16"/>
<dbReference type="PaxDb" id="4097-Q9SEH7"/>
<dbReference type="KEGG" id="nta:107799426"/>
<dbReference type="OrthoDB" id="38125at2759"/>
<dbReference type="PhylomeDB" id="Q9SEH7"/>
<dbReference type="BRENDA" id="2.1.1.53">
    <property type="organism ID" value="3645"/>
</dbReference>
<dbReference type="UniPathway" id="UPA00107"/>
<dbReference type="Proteomes" id="UP000084051">
    <property type="component" value="Unplaced"/>
</dbReference>
<dbReference type="GO" id="GO:0005829">
    <property type="term" value="C:cytosol"/>
    <property type="evidence" value="ECO:0000318"/>
    <property type="project" value="GO_Central"/>
</dbReference>
<dbReference type="GO" id="GO:0030750">
    <property type="term" value="F:putrescine N-methyltransferase activity"/>
    <property type="evidence" value="ECO:0007669"/>
    <property type="project" value="UniProtKB-EC"/>
</dbReference>
<dbReference type="GO" id="GO:0004766">
    <property type="term" value="F:spermidine synthase activity"/>
    <property type="evidence" value="ECO:0000318"/>
    <property type="project" value="GO_Central"/>
</dbReference>
<dbReference type="GO" id="GO:0009820">
    <property type="term" value="P:alkaloid metabolic process"/>
    <property type="evidence" value="ECO:0007669"/>
    <property type="project" value="UniProtKB-KW"/>
</dbReference>
<dbReference type="GO" id="GO:0032259">
    <property type="term" value="P:methylation"/>
    <property type="evidence" value="ECO:0007669"/>
    <property type="project" value="UniProtKB-KW"/>
</dbReference>
<dbReference type="GO" id="GO:0042179">
    <property type="term" value="P:nicotine biosynthetic process"/>
    <property type="evidence" value="ECO:0007669"/>
    <property type="project" value="UniProtKB-UniPathway"/>
</dbReference>
<dbReference type="GO" id="GO:0009446">
    <property type="term" value="P:putrescine biosynthetic process"/>
    <property type="evidence" value="ECO:0007669"/>
    <property type="project" value="UniProtKB-KW"/>
</dbReference>
<dbReference type="GO" id="GO:0009753">
    <property type="term" value="P:response to jasmonic acid"/>
    <property type="evidence" value="ECO:0000270"/>
    <property type="project" value="UniProtKB"/>
</dbReference>
<dbReference type="GO" id="GO:0008295">
    <property type="term" value="P:spermidine biosynthetic process"/>
    <property type="evidence" value="ECO:0000318"/>
    <property type="project" value="GO_Central"/>
</dbReference>
<dbReference type="CDD" id="cd02440">
    <property type="entry name" value="AdoMet_MTases"/>
    <property type="match status" value="1"/>
</dbReference>
<dbReference type="FunFam" id="2.30.140.10:FF:000001">
    <property type="entry name" value="SPE3p Spermidine synthase"/>
    <property type="match status" value="1"/>
</dbReference>
<dbReference type="FunFam" id="3.40.50.150:FF:000013">
    <property type="entry name" value="Spermidine synthase"/>
    <property type="match status" value="1"/>
</dbReference>
<dbReference type="Gene3D" id="2.30.140.10">
    <property type="entry name" value="Spermidine synthase, tetramerisation domain"/>
    <property type="match status" value="1"/>
</dbReference>
<dbReference type="Gene3D" id="3.40.50.150">
    <property type="entry name" value="Vaccinia Virus protein VP39"/>
    <property type="match status" value="1"/>
</dbReference>
<dbReference type="HAMAP" id="MF_00198">
    <property type="entry name" value="Spermidine_synth"/>
    <property type="match status" value="1"/>
</dbReference>
<dbReference type="InterPro" id="IPR030374">
    <property type="entry name" value="PABS"/>
</dbReference>
<dbReference type="InterPro" id="IPR030373">
    <property type="entry name" value="PABS_CS"/>
</dbReference>
<dbReference type="InterPro" id="IPR025803">
    <property type="entry name" value="Putrescine_N-MeTfrase"/>
</dbReference>
<dbReference type="InterPro" id="IPR029063">
    <property type="entry name" value="SAM-dependent_MTases_sf"/>
</dbReference>
<dbReference type="InterPro" id="IPR001045">
    <property type="entry name" value="Spermi_synthase"/>
</dbReference>
<dbReference type="InterPro" id="IPR035246">
    <property type="entry name" value="Spermidine_synt_N"/>
</dbReference>
<dbReference type="InterPro" id="IPR037163">
    <property type="entry name" value="Spermidine_synt_N_sf"/>
</dbReference>
<dbReference type="NCBIfam" id="NF002010">
    <property type="entry name" value="PRK00811.1"/>
    <property type="match status" value="1"/>
</dbReference>
<dbReference type="NCBIfam" id="TIGR00417">
    <property type="entry name" value="speE"/>
    <property type="match status" value="1"/>
</dbReference>
<dbReference type="PANTHER" id="PTHR11558:SF53">
    <property type="entry name" value="PUTRESCINE N-METHYLTRANSFERASE 1"/>
    <property type="match status" value="1"/>
</dbReference>
<dbReference type="PANTHER" id="PTHR11558">
    <property type="entry name" value="SPERMIDINE/SPERMINE SYNTHASE"/>
    <property type="match status" value="1"/>
</dbReference>
<dbReference type="Pfam" id="PF17284">
    <property type="entry name" value="Spermine_synt_N"/>
    <property type="match status" value="1"/>
</dbReference>
<dbReference type="Pfam" id="PF01564">
    <property type="entry name" value="Spermine_synth"/>
    <property type="match status" value="1"/>
</dbReference>
<dbReference type="SUPFAM" id="SSF53335">
    <property type="entry name" value="S-adenosyl-L-methionine-dependent methyltransferases"/>
    <property type="match status" value="1"/>
</dbReference>
<dbReference type="PROSITE" id="PS01330">
    <property type="entry name" value="PABS_1"/>
    <property type="match status" value="1"/>
</dbReference>
<dbReference type="PROSITE" id="PS51006">
    <property type="entry name" value="PABS_2"/>
    <property type="match status" value="1"/>
</dbReference>
<dbReference type="PROSITE" id="PS51615">
    <property type="entry name" value="SAM_MT_PUTRESCINE"/>
    <property type="match status" value="1"/>
</dbReference>
<organism>
    <name type="scientific">Nicotiana tabacum</name>
    <name type="common">Common tobacco</name>
    <dbReference type="NCBI Taxonomy" id="4097"/>
    <lineage>
        <taxon>Eukaryota</taxon>
        <taxon>Viridiplantae</taxon>
        <taxon>Streptophyta</taxon>
        <taxon>Embryophyta</taxon>
        <taxon>Tracheophyta</taxon>
        <taxon>Spermatophyta</taxon>
        <taxon>Magnoliopsida</taxon>
        <taxon>eudicotyledons</taxon>
        <taxon>Gunneridae</taxon>
        <taxon>Pentapetalae</taxon>
        <taxon>asterids</taxon>
        <taxon>lamiids</taxon>
        <taxon>Solanales</taxon>
        <taxon>Solanaceae</taxon>
        <taxon>Nicotianoideae</taxon>
        <taxon>Nicotianeae</taxon>
        <taxon>Nicotiana</taxon>
    </lineage>
</organism>
<name>PMT2_TOBAC</name>
<accession>Q9SEH7</accession>
<accession>A0A1S4AN16</accession>
<protein>
    <recommendedName>
        <fullName evidence="9">Putrescine N-methyltransferase 2</fullName>
        <shortName evidence="9">NtPMT2</shortName>
        <ecNumber evidence="2">2.1.1.53</ecNumber>
    </recommendedName>
</protein>
<reference key="1">
    <citation type="journal article" date="1999" name="Plant Mol. Biol.">
        <title>Structure and expression of the gene family encoding putrescine N-methyltransferase in Nicotiana tabacum: new clues to the evolutionary origin of cultivated tobacco.</title>
        <authorList>
            <person name="Riechers D.E."/>
            <person name="Timko M.P."/>
        </authorList>
    </citation>
    <scope>NUCLEOTIDE SEQUENCE [GENOMIC DNA]</scope>
    <scope>TISSUE SPECIFICITY</scope>
    <scope>INDUCTION BY YOUNG AERIAL TISSUES REMOVAL</scope>
    <scope>GENE FAMILY</scope>
    <source>
        <strain>cv. Xanthi</strain>
    </source>
</reference>
<reference key="2">
    <citation type="journal article" date="2014" name="Nat. Commun.">
        <title>The tobacco genome sequence and its comparison with those of tomato and potato.</title>
        <authorList>
            <person name="Sierro N."/>
            <person name="Battey J.N."/>
            <person name="Ouadi S."/>
            <person name="Bakaher N."/>
            <person name="Bovet L."/>
            <person name="Willig A."/>
            <person name="Goepfert S."/>
            <person name="Peitsch M.C."/>
            <person name="Ivanov N.V."/>
        </authorList>
    </citation>
    <scope>NUCLEOTIDE SEQUENCE [LARGE SCALE GENOMIC DNA]</scope>
    <source>
        <strain>cv. TN90</strain>
    </source>
</reference>
<reference key="3">
    <citation type="journal article" date="1998" name="Plant Mol. Biol.">
        <title>Differential induction by methyl jasmonate of genes encoding ornithine decarboxylase and other enzymes involved in nicotine biosynthesis in tobacco cell cultures.</title>
        <authorList>
            <person name="Imanishi S."/>
            <person name="Hashizume K."/>
            <person name="Nakakita M."/>
            <person name="Kojima H."/>
            <person name="Matsubayashi Y."/>
            <person name="Hashimoto T."/>
            <person name="Sakagami Y."/>
            <person name="Yamada Y."/>
            <person name="Nakamura K."/>
        </authorList>
    </citation>
    <scope>INDUCTION BY JASMONATE</scope>
    <source>
        <strain>cv. Bright Yellow 2</strain>
    </source>
</reference>
<reference key="4">
    <citation type="journal article" date="2004" name="Plant Mol. Biol.">
        <title>Methyl jasmonate induced expression of the tobacco putrescine N -methyltransferase genes requires both G-box and GCC-motif elements.</title>
        <authorList>
            <person name="Xu B."/>
            <person name="Timko M."/>
        </authorList>
    </citation>
    <scope>INDUCTION BY JASMONATE</scope>
    <source>
        <strain>cv. Bright Yellow 2</strain>
    </source>
</reference>
<reference key="5">
    <citation type="journal article" date="2009" name="Phytochemistry">
        <title>Putrescine N-methyltransferase--the start for alkaloids.</title>
        <authorList>
            <person name="Biastoff S."/>
            <person name="Brandt W."/>
            <person name="Draeger B."/>
        </authorList>
    </citation>
    <scope>REVIEW ON PUTRESCINE N-METHYLTRANSFERASE</scope>
</reference>
<reference key="6">
    <citation type="journal article" date="2013" name="Phytochemistry">
        <title>Molecular genetics of alkaloid biosynthesis in Nicotiana tabacum.</title>
        <authorList>
            <person name="Dewey R.E."/>
            <person name="Xie J."/>
        </authorList>
    </citation>
    <scope>REVIEW ON ALKALOID BIOSYNTHESIS IN NICOTIANA TABACUM</scope>
</reference>
<reference key="7">
    <citation type="journal article" date="2015" name="Mol. Genet. Genomics">
        <title>Current status and prospects for the study of Nicotiana genomics, genetics, and nicotine biosynthesis genes.</title>
        <authorList>
            <person name="Wang X."/>
            <person name="Bennetzen J.L."/>
        </authorList>
    </citation>
    <scope>REVIEW ON NICOTINE BIOSYNTHESIS</scope>
</reference>
<reference key="8">
    <citation type="journal article" date="2019" name="Food Chem. Toxicol.">
        <title>Antiparasitic properties of leaf extracts derived from selected Nicotiana species and Nicotiana tabacum varieties.</title>
        <authorList>
            <person name="Schorderet Weber S."/>
            <person name="Kaminski K.P."/>
            <person name="Perret J.-L."/>
            <person name="Leroy P."/>
            <person name="Mazurov A."/>
            <person name="Peitsch M.C."/>
            <person name="Ivanov N.V."/>
            <person name="Hoeng J."/>
        </authorList>
    </citation>
    <scope>FUNCTION</scope>
    <source>
        <strain>cv. Burley Stella</strain>
        <strain>cv. Burley TN90</strain>
        <strain>cv. Virginia ITB 683</strain>
        <strain>cv. Virginia K326</strain>
    </source>
</reference>
<reference key="9">
    <citation type="journal article" date="2021" name="Plant Direct">
        <title>Impact of nicotine pathway downregulation on polyamine biosynthesis and leaf ripening in tobacco.</title>
        <authorList>
            <person name="Noelke G."/>
            <person name="Chudobova I."/>
            <person name="Houdelet M."/>
            <person name="Volke D."/>
            <person name="Lusso M."/>
            <person name="Frederick J."/>
            <person name="Kudithipudi C."/>
            <person name="Shen Y."/>
            <person name="Warek U."/>
            <person name="Strickland J.A."/>
            <person name="Xu D."/>
            <person name="Schinkel H."/>
            <person name="Schillberg S."/>
        </authorList>
    </citation>
    <scope>FUNCTION</scope>
    <scope>DISRUPTION PHENOTYPE</scope>
    <source>
        <strain>cv. Burley TN90 LC</strain>
    </source>
</reference>
<comment type="function">
    <text evidence="6 7 9">Involved in the biosynthesis of pyridine alkaloid natural products, leading mainly to the production of anabasine, anatabine, nicotine and nornicotine, effective deterrents against herbivores with antiparasitic and pesticide properties (neurotoxins); nornicotine serves as the precursor in the synthesis of the carcinogen compound N'-nitrosonornicotine (NNN) (PubMed:10598105, PubMed:31276744, PubMed:34095742). Methyltransferase that mediates the conversion of putrescine to N-methylputrescine (PubMed:10598105). Promotes leaves ripening (PubMed:34095742).</text>
</comment>
<comment type="catalytic activity">
    <reaction evidence="2">
        <text>putrescine + S-adenosyl-L-methionine = N-methylputrescine + S-adenosyl-L-homocysteine + H(+)</text>
        <dbReference type="Rhea" id="RHEA:15037"/>
        <dbReference type="ChEBI" id="CHEBI:15378"/>
        <dbReference type="ChEBI" id="CHEBI:57856"/>
        <dbReference type="ChEBI" id="CHEBI:58039"/>
        <dbReference type="ChEBI" id="CHEBI:59789"/>
        <dbReference type="ChEBI" id="CHEBI:326268"/>
        <dbReference type="EC" id="2.1.1.53"/>
    </reaction>
</comment>
<comment type="pathway">
    <text evidence="10">Alkaloid biosynthesis; nicotine biosynthesis.</text>
</comment>
<comment type="tissue specificity">
    <text evidence="4">Predominantly expressed in roots.</text>
</comment>
<comment type="induction">
    <text evidence="4 5 8">Accumulates upon the removal of flower heads and young leaves (PubMed:10598105). Triggered by jasmonic acid (MeJA) (PubMed:15604714, PubMed:9869416).</text>
</comment>
<comment type="disruption phenotype">
    <text evidence="7">Plants suppressed for PMT1, PMT2, PMT3 and PMT4 exhibit strongly reduced nicotine levels but accumulate polyamines in roots, and have an impaired leaf maturation phenotype at harvest.</text>
</comment>
<comment type="similarity">
    <text evidence="2">Belongs to the class I-like SAM-binding methyltransferase superfamily. Putrescine methyltransferase family.</text>
</comment>
<sequence>MEVISTNTNGSTIFKSGAIPMNGHHNGTSKHQNGHKNGTSEQQNGTISLDNGNELLGNSNCIKPGWFSEFSALWPGEAFSLKVEKLLFQGKSDYQDVMLFESATYGKVLTLDGAIQHTENGGFPYTEMIVHLPLGSIPNPKKVLIIGGGIGFTLFEMLRYPTIEKIDIVEIDDVVVDVSRKFFPYLAANFNDPRVTLVLGDGAAFVKAAQAEYYDAIIVDSSDPIGPAKDLFERPFFEAVAKALRPGGVVCTQAESIWLHMHIIKQIIANCRQVFKGSVNYAWTTVPTYPTGVIGYMLCSTEGPEIDFKNPVNPIDKETAQVKSKLAPLKFYNSDIHKAAFILPSFARSMIES</sequence>
<feature type="chain" id="PRO_0000156542" description="Putrescine N-methyltransferase 2">
    <location>
        <begin position="1"/>
        <end position="353"/>
    </location>
</feature>
<feature type="domain" description="PABS" evidence="1">
    <location>
        <begin position="64"/>
        <end position="301"/>
    </location>
</feature>
<feature type="region of interest" description="Disordered" evidence="3">
    <location>
        <begin position="15"/>
        <end position="50"/>
    </location>
</feature>
<feature type="compositionally biased region" description="Polar residues" evidence="3">
    <location>
        <begin position="25"/>
        <end position="50"/>
    </location>
</feature>
<feature type="active site" description="Proton acceptor" evidence="1 2">
    <location>
        <position position="220"/>
    </location>
</feature>
<feature type="binding site" evidence="2">
    <location>
        <position position="95"/>
    </location>
    <ligand>
        <name>S-adenosyl-L-methionine</name>
        <dbReference type="ChEBI" id="CHEBI:59789"/>
    </ligand>
</feature>
<feature type="binding site" evidence="2">
    <location>
        <position position="170"/>
    </location>
    <ligand>
        <name>S-adenosyl-L-methionine</name>
        <dbReference type="ChEBI" id="CHEBI:59789"/>
    </ligand>
</feature>
<feature type="binding site" evidence="2">
    <location>
        <begin position="201"/>
        <end position="202"/>
    </location>
    <ligand>
        <name>S-adenosyl-L-methionine</name>
        <dbReference type="ChEBI" id="CHEBI:59789"/>
    </ligand>
</feature>
<feature type="binding site" evidence="2">
    <location>
        <position position="289"/>
    </location>
    <ligand>
        <name>S-adenosyl-L-methionine</name>
        <dbReference type="ChEBI" id="CHEBI:59789"/>
    </ligand>
</feature>
<proteinExistence type="evidence at transcript level"/>
<gene>
    <name evidence="9" type="primary">PMT2</name>
    <name evidence="11" type="ORF">LOC107799426</name>
</gene>
<evidence type="ECO:0000255" key="1">
    <source>
        <dbReference type="PROSITE-ProRule" id="PRU00354"/>
    </source>
</evidence>
<evidence type="ECO:0000255" key="2">
    <source>
        <dbReference type="PROSITE-ProRule" id="PRU00947"/>
    </source>
</evidence>
<evidence type="ECO:0000256" key="3">
    <source>
        <dbReference type="SAM" id="MobiDB-lite"/>
    </source>
</evidence>
<evidence type="ECO:0000269" key="4">
    <source>
    </source>
</evidence>
<evidence type="ECO:0000269" key="5">
    <source>
    </source>
</evidence>
<evidence type="ECO:0000269" key="6">
    <source>
    </source>
</evidence>
<evidence type="ECO:0000269" key="7">
    <source>
    </source>
</evidence>
<evidence type="ECO:0000269" key="8">
    <source>
    </source>
</evidence>
<evidence type="ECO:0000303" key="9">
    <source>
    </source>
</evidence>
<evidence type="ECO:0000305" key="10"/>
<evidence type="ECO:0000312" key="11">
    <source>
        <dbReference type="RefSeq" id="XP_016478024.1"/>
    </source>
</evidence>